<evidence type="ECO:0000255" key="1">
    <source>
        <dbReference type="HAMAP-Rule" id="MF_00059"/>
    </source>
</evidence>
<accession>Q14GG5</accession>
<organism>
    <name type="scientific">Francisella tularensis subsp. tularensis (strain FSC 198)</name>
    <dbReference type="NCBI Taxonomy" id="393115"/>
    <lineage>
        <taxon>Bacteria</taxon>
        <taxon>Pseudomonadati</taxon>
        <taxon>Pseudomonadota</taxon>
        <taxon>Gammaproteobacteria</taxon>
        <taxon>Thiotrichales</taxon>
        <taxon>Francisellaceae</taxon>
        <taxon>Francisella</taxon>
    </lineage>
</organism>
<reference key="1">
    <citation type="journal article" date="2007" name="PLoS ONE">
        <title>Genome sequencing shows that European isolates of Francisella tularensis subspecies tularensis are almost identical to US laboratory strain Schu S4.</title>
        <authorList>
            <person name="Chaudhuri R.R."/>
            <person name="Ren C.-P."/>
            <person name="Desmond L."/>
            <person name="Vincent G.A."/>
            <person name="Silman N.J."/>
            <person name="Brehm J.K."/>
            <person name="Elmore M.J."/>
            <person name="Hudson M.J."/>
            <person name="Forsman M."/>
            <person name="Isherwood K.E."/>
            <person name="Gurycova D."/>
            <person name="Minton N.P."/>
            <person name="Titball R.W."/>
            <person name="Pallen M.J."/>
            <person name="Vipond R."/>
        </authorList>
    </citation>
    <scope>NUCLEOTIDE SEQUENCE [LARGE SCALE GENOMIC DNA]</scope>
    <source>
        <strain>FSC 198</strain>
    </source>
</reference>
<feature type="chain" id="PRO_0000296811" description="DNA-directed RNA polymerase subunit alpha 2">
    <location>
        <begin position="1"/>
        <end position="318"/>
    </location>
</feature>
<feature type="region of interest" description="Alpha N-terminal domain (alpha-NTD)" evidence="1">
    <location>
        <begin position="1"/>
        <end position="227"/>
    </location>
</feature>
<feature type="region of interest" description="Alpha C-terminal domain (alpha-CTD)" evidence="1">
    <location>
        <begin position="242"/>
        <end position="318"/>
    </location>
</feature>
<protein>
    <recommendedName>
        <fullName evidence="1">DNA-directed RNA polymerase subunit alpha 2</fullName>
        <shortName evidence="1">RNAP subunit alpha 2</shortName>
        <ecNumber evidence="1">2.7.7.6</ecNumber>
    </recommendedName>
    <alternativeName>
        <fullName evidence="1">RNA polymerase subunit alpha 2</fullName>
    </alternativeName>
    <alternativeName>
        <fullName evidence="1">Transcriptase subunit alpha 2</fullName>
    </alternativeName>
</protein>
<sequence length="318" mass="35141">MALENLLHPTNIKIDEYAKNATKFSFEALERGVGYTLGFALKQTMLYSIAGACVTSIKINDGKVTSLEDVIPCDETVADIILNVKSLPVTLAEGVETGTITFELSGSEEEIFSEEAKLSEGLAITEEVFICSYNGGKKLKIEAKVEKGVGFRPAQDNFKDGEFLLDATFSPVVFCDFEIKDARVGRRTDLDKLELNIKTNGNVNCEEALRLAATKIQNQLRNILDIEEINKGIFVEDPTKDINPILLKHVEELNLTARSSNCLKAVNIRLIGELVQKTENELLKAPNFGKKSLTEIKDKLSELGLSLGTLIENWPQDL</sequence>
<gene>
    <name evidence="1" type="primary">rpoA2</name>
    <name type="ordered locus">FTF1442c</name>
</gene>
<comment type="function">
    <text evidence="1">DNA-dependent RNA polymerase catalyzes the transcription of DNA into RNA using the four ribonucleoside triphosphates as substrates.</text>
</comment>
<comment type="catalytic activity">
    <reaction evidence="1">
        <text>RNA(n) + a ribonucleoside 5'-triphosphate = RNA(n+1) + diphosphate</text>
        <dbReference type="Rhea" id="RHEA:21248"/>
        <dbReference type="Rhea" id="RHEA-COMP:14527"/>
        <dbReference type="Rhea" id="RHEA-COMP:17342"/>
        <dbReference type="ChEBI" id="CHEBI:33019"/>
        <dbReference type="ChEBI" id="CHEBI:61557"/>
        <dbReference type="ChEBI" id="CHEBI:140395"/>
        <dbReference type="EC" id="2.7.7.6"/>
    </reaction>
</comment>
<comment type="subunit">
    <text evidence="1">Homodimer. The RNAP catalytic core consists of 2 alpha, 1 beta, 1 beta' and 1 omega subunit. When a sigma factor is associated with the core the holoenzyme is formed, which can initiate transcription.</text>
</comment>
<comment type="domain">
    <text evidence="1">The N-terminal domain is essential for RNAP assembly and basal transcription, whereas the C-terminal domain is involved in interaction with transcriptional regulators and with upstream promoter elements.</text>
</comment>
<comment type="similarity">
    <text evidence="1">Belongs to the RNA polymerase alpha chain family.</text>
</comment>
<dbReference type="EC" id="2.7.7.6" evidence="1"/>
<dbReference type="EMBL" id="AM286280">
    <property type="protein sequence ID" value="CAL09458.1"/>
    <property type="molecule type" value="Genomic_DNA"/>
</dbReference>
<dbReference type="RefSeq" id="WP_003022267.1">
    <property type="nucleotide sequence ID" value="NC_008245.1"/>
</dbReference>
<dbReference type="SMR" id="Q14GG5"/>
<dbReference type="KEGG" id="ftf:FTF1442c"/>
<dbReference type="HOGENOM" id="CLU_053084_0_0_6"/>
<dbReference type="GO" id="GO:0005737">
    <property type="term" value="C:cytoplasm"/>
    <property type="evidence" value="ECO:0007669"/>
    <property type="project" value="UniProtKB-ARBA"/>
</dbReference>
<dbReference type="GO" id="GO:0000428">
    <property type="term" value="C:DNA-directed RNA polymerase complex"/>
    <property type="evidence" value="ECO:0007669"/>
    <property type="project" value="UniProtKB-KW"/>
</dbReference>
<dbReference type="GO" id="GO:0003677">
    <property type="term" value="F:DNA binding"/>
    <property type="evidence" value="ECO:0007669"/>
    <property type="project" value="UniProtKB-UniRule"/>
</dbReference>
<dbReference type="GO" id="GO:0003899">
    <property type="term" value="F:DNA-directed RNA polymerase activity"/>
    <property type="evidence" value="ECO:0007669"/>
    <property type="project" value="UniProtKB-UniRule"/>
</dbReference>
<dbReference type="GO" id="GO:0046983">
    <property type="term" value="F:protein dimerization activity"/>
    <property type="evidence" value="ECO:0007669"/>
    <property type="project" value="InterPro"/>
</dbReference>
<dbReference type="GO" id="GO:0006351">
    <property type="term" value="P:DNA-templated transcription"/>
    <property type="evidence" value="ECO:0007669"/>
    <property type="project" value="UniProtKB-UniRule"/>
</dbReference>
<dbReference type="FunFam" id="1.10.150.20:FF:000001">
    <property type="entry name" value="DNA-directed RNA polymerase subunit alpha"/>
    <property type="match status" value="1"/>
</dbReference>
<dbReference type="Gene3D" id="1.10.150.20">
    <property type="entry name" value="5' to 3' exonuclease, C-terminal subdomain"/>
    <property type="match status" value="1"/>
</dbReference>
<dbReference type="Gene3D" id="2.170.120.12">
    <property type="entry name" value="DNA-directed RNA polymerase, insert domain"/>
    <property type="match status" value="1"/>
</dbReference>
<dbReference type="Gene3D" id="3.30.1360.10">
    <property type="entry name" value="RNA polymerase, RBP11-like subunit"/>
    <property type="match status" value="1"/>
</dbReference>
<dbReference type="HAMAP" id="MF_00059">
    <property type="entry name" value="RNApol_bact_RpoA"/>
    <property type="match status" value="1"/>
</dbReference>
<dbReference type="InterPro" id="IPR011262">
    <property type="entry name" value="DNA-dir_RNA_pol_insert"/>
</dbReference>
<dbReference type="InterPro" id="IPR011263">
    <property type="entry name" value="DNA-dir_RNA_pol_RpoA/D/Rpb3"/>
</dbReference>
<dbReference type="InterPro" id="IPR011773">
    <property type="entry name" value="DNA-dir_RpoA"/>
</dbReference>
<dbReference type="InterPro" id="IPR036603">
    <property type="entry name" value="RBP11-like"/>
</dbReference>
<dbReference type="InterPro" id="IPR011260">
    <property type="entry name" value="RNAP_asu_C"/>
</dbReference>
<dbReference type="InterPro" id="IPR036643">
    <property type="entry name" value="RNApol_insert_sf"/>
</dbReference>
<dbReference type="NCBIfam" id="NF003513">
    <property type="entry name" value="PRK05182.1-2"/>
    <property type="match status" value="1"/>
</dbReference>
<dbReference type="Pfam" id="PF01000">
    <property type="entry name" value="RNA_pol_A_bac"/>
    <property type="match status" value="1"/>
</dbReference>
<dbReference type="Pfam" id="PF03118">
    <property type="entry name" value="RNA_pol_A_CTD"/>
    <property type="match status" value="1"/>
</dbReference>
<dbReference type="Pfam" id="PF01193">
    <property type="entry name" value="RNA_pol_L"/>
    <property type="match status" value="1"/>
</dbReference>
<dbReference type="SMART" id="SM00662">
    <property type="entry name" value="RPOLD"/>
    <property type="match status" value="1"/>
</dbReference>
<dbReference type="SUPFAM" id="SSF47789">
    <property type="entry name" value="C-terminal domain of RNA polymerase alpha subunit"/>
    <property type="match status" value="1"/>
</dbReference>
<dbReference type="SUPFAM" id="SSF56553">
    <property type="entry name" value="Insert subdomain of RNA polymerase alpha subunit"/>
    <property type="match status" value="1"/>
</dbReference>
<dbReference type="SUPFAM" id="SSF55257">
    <property type="entry name" value="RBP11-like subunits of RNA polymerase"/>
    <property type="match status" value="1"/>
</dbReference>
<name>RPOA2_FRAT1</name>
<proteinExistence type="inferred from homology"/>
<keyword id="KW-0240">DNA-directed RNA polymerase</keyword>
<keyword id="KW-0548">Nucleotidyltransferase</keyword>
<keyword id="KW-0804">Transcription</keyword>
<keyword id="KW-0808">Transferase</keyword>